<organism>
    <name type="scientific">Desulfovibrio desulfuricans (strain ATCC 27774 / DSM 6949 / MB)</name>
    <dbReference type="NCBI Taxonomy" id="525146"/>
    <lineage>
        <taxon>Bacteria</taxon>
        <taxon>Pseudomonadati</taxon>
        <taxon>Thermodesulfobacteriota</taxon>
        <taxon>Desulfovibrionia</taxon>
        <taxon>Desulfovibrionales</taxon>
        <taxon>Desulfovibrionaceae</taxon>
        <taxon>Desulfovibrio</taxon>
    </lineage>
</organism>
<name>RS15_DESDA</name>
<accession>B8J1Y0</accession>
<proteinExistence type="inferred from homology"/>
<reference key="1">
    <citation type="submission" date="2009-01" db="EMBL/GenBank/DDBJ databases">
        <title>Complete sequence of Desulfovibrio desulfuricans subsp. desulfuricans str. ATCC 27774.</title>
        <authorList>
            <consortium name="US DOE Joint Genome Institute"/>
            <person name="Lucas S."/>
            <person name="Copeland A."/>
            <person name="Lapidus A."/>
            <person name="Glavina del Rio T."/>
            <person name="Tice H."/>
            <person name="Bruce D."/>
            <person name="Goodwin L."/>
            <person name="Pitluck S."/>
            <person name="Sims D."/>
            <person name="Lu M."/>
            <person name="Kiss H."/>
            <person name="Meineke L."/>
            <person name="Brettin T."/>
            <person name="Detter J.C."/>
            <person name="Han C."/>
            <person name="Larimer F."/>
            <person name="Land M."/>
            <person name="Hauser L."/>
            <person name="Kyrpides N."/>
            <person name="Ovchinnikova G."/>
            <person name="Hazen T.C."/>
        </authorList>
    </citation>
    <scope>NUCLEOTIDE SEQUENCE [LARGE SCALE GENOMIC DNA]</scope>
    <source>
        <strain>ATCC 27774 / DSM 6949 / MB</strain>
    </source>
</reference>
<keyword id="KW-0687">Ribonucleoprotein</keyword>
<keyword id="KW-0689">Ribosomal protein</keyword>
<keyword id="KW-0694">RNA-binding</keyword>
<keyword id="KW-0699">rRNA-binding</keyword>
<feature type="chain" id="PRO_1000166417" description="Small ribosomal subunit protein uS15">
    <location>
        <begin position="1"/>
        <end position="89"/>
    </location>
</feature>
<feature type="region of interest" description="Disordered" evidence="2">
    <location>
        <begin position="1"/>
        <end position="24"/>
    </location>
</feature>
<feature type="compositionally biased region" description="Basic and acidic residues" evidence="2">
    <location>
        <begin position="1"/>
        <end position="21"/>
    </location>
</feature>
<comment type="function">
    <text evidence="1">One of the primary rRNA binding proteins, it binds directly to 16S rRNA where it helps nucleate assembly of the platform of the 30S subunit by binding and bridging several RNA helices of the 16S rRNA.</text>
</comment>
<comment type="function">
    <text evidence="1">Forms an intersubunit bridge (bridge B4) with the 23S rRNA of the 50S subunit in the ribosome.</text>
</comment>
<comment type="subunit">
    <text evidence="1">Part of the 30S ribosomal subunit. Forms a bridge to the 50S subunit in the 70S ribosome, contacting the 23S rRNA.</text>
</comment>
<comment type="similarity">
    <text evidence="1">Belongs to the universal ribosomal protein uS15 family.</text>
</comment>
<evidence type="ECO:0000255" key="1">
    <source>
        <dbReference type="HAMAP-Rule" id="MF_01343"/>
    </source>
</evidence>
<evidence type="ECO:0000256" key="2">
    <source>
        <dbReference type="SAM" id="MobiDB-lite"/>
    </source>
</evidence>
<evidence type="ECO:0000305" key="3"/>
<gene>
    <name evidence="1" type="primary">rpsO</name>
    <name type="ordered locus">Ddes_0055</name>
</gene>
<dbReference type="EMBL" id="CP001358">
    <property type="protein sequence ID" value="ACL47975.1"/>
    <property type="molecule type" value="Genomic_DNA"/>
</dbReference>
<dbReference type="SMR" id="B8J1Y0"/>
<dbReference type="STRING" id="525146.Ddes_0055"/>
<dbReference type="KEGG" id="dds:Ddes_0055"/>
<dbReference type="eggNOG" id="COG0184">
    <property type="taxonomic scope" value="Bacteria"/>
</dbReference>
<dbReference type="HOGENOM" id="CLU_148518_0_0_7"/>
<dbReference type="GO" id="GO:0022627">
    <property type="term" value="C:cytosolic small ribosomal subunit"/>
    <property type="evidence" value="ECO:0007669"/>
    <property type="project" value="TreeGrafter"/>
</dbReference>
<dbReference type="GO" id="GO:0019843">
    <property type="term" value="F:rRNA binding"/>
    <property type="evidence" value="ECO:0007669"/>
    <property type="project" value="UniProtKB-UniRule"/>
</dbReference>
<dbReference type="GO" id="GO:0003735">
    <property type="term" value="F:structural constituent of ribosome"/>
    <property type="evidence" value="ECO:0007669"/>
    <property type="project" value="InterPro"/>
</dbReference>
<dbReference type="GO" id="GO:0006412">
    <property type="term" value="P:translation"/>
    <property type="evidence" value="ECO:0007669"/>
    <property type="project" value="UniProtKB-UniRule"/>
</dbReference>
<dbReference type="CDD" id="cd00353">
    <property type="entry name" value="Ribosomal_S15p_S13e"/>
    <property type="match status" value="1"/>
</dbReference>
<dbReference type="FunFam" id="1.10.287.10:FF:000002">
    <property type="entry name" value="30S ribosomal protein S15"/>
    <property type="match status" value="1"/>
</dbReference>
<dbReference type="Gene3D" id="6.10.250.3130">
    <property type="match status" value="1"/>
</dbReference>
<dbReference type="Gene3D" id="1.10.287.10">
    <property type="entry name" value="S15/NS1, RNA-binding"/>
    <property type="match status" value="1"/>
</dbReference>
<dbReference type="HAMAP" id="MF_01343_B">
    <property type="entry name" value="Ribosomal_uS15_B"/>
    <property type="match status" value="1"/>
</dbReference>
<dbReference type="InterPro" id="IPR000589">
    <property type="entry name" value="Ribosomal_uS15"/>
</dbReference>
<dbReference type="InterPro" id="IPR005290">
    <property type="entry name" value="Ribosomal_uS15_bac-type"/>
</dbReference>
<dbReference type="InterPro" id="IPR009068">
    <property type="entry name" value="uS15_NS1_RNA-bd_sf"/>
</dbReference>
<dbReference type="NCBIfam" id="TIGR00952">
    <property type="entry name" value="S15_bact"/>
    <property type="match status" value="1"/>
</dbReference>
<dbReference type="PANTHER" id="PTHR23321">
    <property type="entry name" value="RIBOSOMAL PROTEIN S15, BACTERIAL AND ORGANELLAR"/>
    <property type="match status" value="1"/>
</dbReference>
<dbReference type="PANTHER" id="PTHR23321:SF26">
    <property type="entry name" value="SMALL RIBOSOMAL SUBUNIT PROTEIN US15M"/>
    <property type="match status" value="1"/>
</dbReference>
<dbReference type="Pfam" id="PF00312">
    <property type="entry name" value="Ribosomal_S15"/>
    <property type="match status" value="1"/>
</dbReference>
<dbReference type="SMART" id="SM01387">
    <property type="entry name" value="Ribosomal_S15"/>
    <property type="match status" value="1"/>
</dbReference>
<dbReference type="SUPFAM" id="SSF47060">
    <property type="entry name" value="S15/NS1 RNA-binding domain"/>
    <property type="match status" value="1"/>
</dbReference>
<dbReference type="PROSITE" id="PS00362">
    <property type="entry name" value="RIBOSOMAL_S15"/>
    <property type="match status" value="1"/>
</dbReference>
<sequence>MVLDPTQKKSVIDAHAKHEGDTGSPEVQVALLTARIEDLTGHFKEHKKDFHSRTGLLKLVGRRRNILNYLKKTDVQRYRALIEKLGLRK</sequence>
<protein>
    <recommendedName>
        <fullName evidence="1">Small ribosomal subunit protein uS15</fullName>
    </recommendedName>
    <alternativeName>
        <fullName evidence="3">30S ribosomal protein S15</fullName>
    </alternativeName>
</protein>